<proteinExistence type="inferred from homology"/>
<comment type="function">
    <text evidence="1">Involved in cell division and chromosome segregation.</text>
</comment>
<comment type="similarity">
    <text evidence="1">Belongs to the WhiA family.</text>
</comment>
<sequence length="327" mass="35618">MSLTSDIKQELAQVHVAKNSVRAAEVSAILRFAGEMQAVGGKLVIEANLDSMQVGMRLQEFIQGLYNSRVDVHTVNPTVSRKTPRYLVRIIDNADEIARRTGLVTRSGHVVKGLAPSVVSGTISDAEAAWRGAFLANGSLSDPGRSSSLEVLCPGQESALALVGCARRIGIAAKTKDSRGFDRVNVRDAEAIGALLTRMGAQKTRIMWEEKRLKRESRTPANRLANFDDANLRRSARAAVAAAARVERAMKILGDDVPEHLAEAGQLRVQHRQASLEELGRLADPQMTKDAVAGRIRRLLTMADKRAEDLKIPDTNSVVTEDLLEEI</sequence>
<accession>A4QEG3</accession>
<gene>
    <name evidence="1" type="primary">whiA</name>
    <name type="ordered locus">cgR_1637</name>
</gene>
<protein>
    <recommendedName>
        <fullName evidence="1">Probable cell division protein WhiA</fullName>
    </recommendedName>
</protein>
<dbReference type="EMBL" id="AP009044">
    <property type="protein sequence ID" value="BAF54629.1"/>
    <property type="molecule type" value="Genomic_DNA"/>
</dbReference>
<dbReference type="RefSeq" id="WP_003856028.1">
    <property type="nucleotide sequence ID" value="NC_009342.1"/>
</dbReference>
<dbReference type="SMR" id="A4QEG3"/>
<dbReference type="KEGG" id="cgt:cgR_1637"/>
<dbReference type="HOGENOM" id="CLU_053282_0_0_11"/>
<dbReference type="PhylomeDB" id="A4QEG3"/>
<dbReference type="Proteomes" id="UP000006698">
    <property type="component" value="Chromosome"/>
</dbReference>
<dbReference type="GO" id="GO:0003677">
    <property type="term" value="F:DNA binding"/>
    <property type="evidence" value="ECO:0007669"/>
    <property type="project" value="UniProtKB-UniRule"/>
</dbReference>
<dbReference type="GO" id="GO:0051301">
    <property type="term" value="P:cell division"/>
    <property type="evidence" value="ECO:0007669"/>
    <property type="project" value="UniProtKB-UniRule"/>
</dbReference>
<dbReference type="GO" id="GO:0043937">
    <property type="term" value="P:regulation of sporulation"/>
    <property type="evidence" value="ECO:0007669"/>
    <property type="project" value="InterPro"/>
</dbReference>
<dbReference type="FunFam" id="3.10.28.10:FF:000001">
    <property type="entry name" value="Probable cell division protein WhiA"/>
    <property type="match status" value="1"/>
</dbReference>
<dbReference type="Gene3D" id="3.10.28.10">
    <property type="entry name" value="Homing endonucleases"/>
    <property type="match status" value="1"/>
</dbReference>
<dbReference type="HAMAP" id="MF_01420">
    <property type="entry name" value="HTH_type_WhiA"/>
    <property type="match status" value="1"/>
</dbReference>
<dbReference type="InterPro" id="IPR027434">
    <property type="entry name" value="Homing_endonucl"/>
</dbReference>
<dbReference type="InterPro" id="IPR018478">
    <property type="entry name" value="Sporu_reg_WhiA_N_dom"/>
</dbReference>
<dbReference type="InterPro" id="IPR003802">
    <property type="entry name" value="Sporulation_regulator_WhiA"/>
</dbReference>
<dbReference type="InterPro" id="IPR023054">
    <property type="entry name" value="Sporulation_regulator_WhiA_C"/>
</dbReference>
<dbReference type="InterPro" id="IPR039518">
    <property type="entry name" value="WhiA_LAGLIDADG_dom"/>
</dbReference>
<dbReference type="NCBIfam" id="TIGR00647">
    <property type="entry name" value="DNA_bind_WhiA"/>
    <property type="match status" value="1"/>
</dbReference>
<dbReference type="PANTHER" id="PTHR37307">
    <property type="entry name" value="CELL DIVISION PROTEIN WHIA-RELATED"/>
    <property type="match status" value="1"/>
</dbReference>
<dbReference type="PANTHER" id="PTHR37307:SF1">
    <property type="entry name" value="CELL DIVISION PROTEIN WHIA-RELATED"/>
    <property type="match status" value="1"/>
</dbReference>
<dbReference type="Pfam" id="PF02650">
    <property type="entry name" value="HTH_WhiA"/>
    <property type="match status" value="1"/>
</dbReference>
<dbReference type="Pfam" id="PF14527">
    <property type="entry name" value="LAGLIDADG_WhiA"/>
    <property type="match status" value="1"/>
</dbReference>
<dbReference type="Pfam" id="PF10298">
    <property type="entry name" value="WhiA_N"/>
    <property type="match status" value="1"/>
</dbReference>
<organism>
    <name type="scientific">Corynebacterium glutamicum (strain R)</name>
    <dbReference type="NCBI Taxonomy" id="340322"/>
    <lineage>
        <taxon>Bacteria</taxon>
        <taxon>Bacillati</taxon>
        <taxon>Actinomycetota</taxon>
        <taxon>Actinomycetes</taxon>
        <taxon>Mycobacteriales</taxon>
        <taxon>Corynebacteriaceae</taxon>
        <taxon>Corynebacterium</taxon>
    </lineage>
</organism>
<name>WHIA_CORGB</name>
<reference key="1">
    <citation type="journal article" date="2007" name="Microbiology">
        <title>Comparative analysis of the Corynebacterium glutamicum group and complete genome sequence of strain R.</title>
        <authorList>
            <person name="Yukawa H."/>
            <person name="Omumasaba C.A."/>
            <person name="Nonaka H."/>
            <person name="Kos P."/>
            <person name="Okai N."/>
            <person name="Suzuki N."/>
            <person name="Suda M."/>
            <person name="Tsuge Y."/>
            <person name="Watanabe J."/>
            <person name="Ikeda Y."/>
            <person name="Vertes A.A."/>
            <person name="Inui M."/>
        </authorList>
    </citation>
    <scope>NUCLEOTIDE SEQUENCE [LARGE SCALE GENOMIC DNA]</scope>
    <source>
        <strain>R</strain>
    </source>
</reference>
<feature type="chain" id="PRO_0000376475" description="Probable cell division protein WhiA">
    <location>
        <begin position="1"/>
        <end position="327"/>
    </location>
</feature>
<feature type="DNA-binding region" description="H-T-H motif" evidence="1">
    <location>
        <begin position="275"/>
        <end position="308"/>
    </location>
</feature>
<keyword id="KW-0131">Cell cycle</keyword>
<keyword id="KW-0132">Cell division</keyword>
<keyword id="KW-0238">DNA-binding</keyword>
<evidence type="ECO:0000255" key="1">
    <source>
        <dbReference type="HAMAP-Rule" id="MF_01420"/>
    </source>
</evidence>